<evidence type="ECO:0000250" key="1"/>
<evidence type="ECO:0000255" key="2"/>
<evidence type="ECO:0000305" key="3"/>
<name>C5081_DICDI</name>
<organism>
    <name type="scientific">Dictyostelium discoideum</name>
    <name type="common">Social amoeba</name>
    <dbReference type="NCBI Taxonomy" id="44689"/>
    <lineage>
        <taxon>Eukaryota</taxon>
        <taxon>Amoebozoa</taxon>
        <taxon>Evosea</taxon>
        <taxon>Eumycetozoa</taxon>
        <taxon>Dictyostelia</taxon>
        <taxon>Dictyosteliales</taxon>
        <taxon>Dictyosteliaceae</taxon>
        <taxon>Dictyostelium</taxon>
    </lineage>
</organism>
<reference key="1">
    <citation type="journal article" date="2002" name="Nature">
        <title>Sequence and analysis of chromosome 2 of Dictyostelium discoideum.</title>
        <authorList>
            <person name="Gloeckner G."/>
            <person name="Eichinger L."/>
            <person name="Szafranski K."/>
            <person name="Pachebat J.A."/>
            <person name="Bankier A.T."/>
            <person name="Dear P.H."/>
            <person name="Lehmann R."/>
            <person name="Baumgart C."/>
            <person name="Parra G."/>
            <person name="Abril J.F."/>
            <person name="Guigo R."/>
            <person name="Kumpf K."/>
            <person name="Tunggal B."/>
            <person name="Cox E.C."/>
            <person name="Quail M.A."/>
            <person name="Platzer M."/>
            <person name="Rosenthal A."/>
            <person name="Noegel A.A."/>
        </authorList>
    </citation>
    <scope>NUCLEOTIDE SEQUENCE [LARGE SCALE GENOMIC DNA]</scope>
    <source>
        <strain>AX4</strain>
    </source>
</reference>
<reference key="2">
    <citation type="journal article" date="2005" name="Nature">
        <title>The genome of the social amoeba Dictyostelium discoideum.</title>
        <authorList>
            <person name="Eichinger L."/>
            <person name="Pachebat J.A."/>
            <person name="Gloeckner G."/>
            <person name="Rajandream M.A."/>
            <person name="Sucgang R."/>
            <person name="Berriman M."/>
            <person name="Song J."/>
            <person name="Olsen R."/>
            <person name="Szafranski K."/>
            <person name="Xu Q."/>
            <person name="Tunggal B."/>
            <person name="Kummerfeld S."/>
            <person name="Madera M."/>
            <person name="Konfortov B.A."/>
            <person name="Rivero F."/>
            <person name="Bankier A.T."/>
            <person name="Lehmann R."/>
            <person name="Hamlin N."/>
            <person name="Davies R."/>
            <person name="Gaudet P."/>
            <person name="Fey P."/>
            <person name="Pilcher K."/>
            <person name="Chen G."/>
            <person name="Saunders D."/>
            <person name="Sodergren E.J."/>
            <person name="Davis P."/>
            <person name="Kerhornou A."/>
            <person name="Nie X."/>
            <person name="Hall N."/>
            <person name="Anjard C."/>
            <person name="Hemphill L."/>
            <person name="Bason N."/>
            <person name="Farbrother P."/>
            <person name="Desany B."/>
            <person name="Just E."/>
            <person name="Morio T."/>
            <person name="Rost R."/>
            <person name="Churcher C.M."/>
            <person name="Cooper J."/>
            <person name="Haydock S."/>
            <person name="van Driessche N."/>
            <person name="Cronin A."/>
            <person name="Goodhead I."/>
            <person name="Muzny D.M."/>
            <person name="Mourier T."/>
            <person name="Pain A."/>
            <person name="Lu M."/>
            <person name="Harper D."/>
            <person name="Lindsay R."/>
            <person name="Hauser H."/>
            <person name="James K.D."/>
            <person name="Quiles M."/>
            <person name="Madan Babu M."/>
            <person name="Saito T."/>
            <person name="Buchrieser C."/>
            <person name="Wardroper A."/>
            <person name="Felder M."/>
            <person name="Thangavelu M."/>
            <person name="Johnson D."/>
            <person name="Knights A."/>
            <person name="Loulseged H."/>
            <person name="Mungall K.L."/>
            <person name="Oliver K."/>
            <person name="Price C."/>
            <person name="Quail M.A."/>
            <person name="Urushihara H."/>
            <person name="Hernandez J."/>
            <person name="Rabbinowitsch E."/>
            <person name="Steffen D."/>
            <person name="Sanders M."/>
            <person name="Ma J."/>
            <person name="Kohara Y."/>
            <person name="Sharp S."/>
            <person name="Simmonds M.N."/>
            <person name="Spiegler S."/>
            <person name="Tivey A."/>
            <person name="Sugano S."/>
            <person name="White B."/>
            <person name="Walker D."/>
            <person name="Woodward J.R."/>
            <person name="Winckler T."/>
            <person name="Tanaka Y."/>
            <person name="Shaulsky G."/>
            <person name="Schleicher M."/>
            <person name="Weinstock G.M."/>
            <person name="Rosenthal A."/>
            <person name="Cox E.C."/>
            <person name="Chisholm R.L."/>
            <person name="Gibbs R.A."/>
            <person name="Loomis W.F."/>
            <person name="Platzer M."/>
            <person name="Kay R.R."/>
            <person name="Williams J.G."/>
            <person name="Dear P.H."/>
            <person name="Noegel A.A."/>
            <person name="Barrell B.G."/>
            <person name="Kuspa A."/>
        </authorList>
    </citation>
    <scope>NUCLEOTIDE SEQUENCE [LARGE SCALE GENOMIC DNA]</scope>
    <source>
        <strain>AX4</strain>
    </source>
</reference>
<proteinExistence type="inferred from homology"/>
<accession>Q556M5</accession>
<comment type="cofactor">
    <cofactor evidence="1">
        <name>heme</name>
        <dbReference type="ChEBI" id="CHEBI:30413"/>
    </cofactor>
</comment>
<comment type="subcellular location">
    <subcellularLocation>
        <location evidence="3">Membrane</location>
        <topology evidence="3">Single-pass membrane protein</topology>
    </subcellularLocation>
</comment>
<comment type="similarity">
    <text evidence="3">Belongs to the cytochrome P450 family.</text>
</comment>
<comment type="caution">
    <text evidence="3">The gene for this protein is duplicated in strains AX3 and AX4. These strains contain a duplication of a segment of 750 kb of chromosome 2 compared to the corresponding sequence in strain AX2.</text>
</comment>
<keyword id="KW-0349">Heme</keyword>
<keyword id="KW-0408">Iron</keyword>
<keyword id="KW-0472">Membrane</keyword>
<keyword id="KW-0479">Metal-binding</keyword>
<keyword id="KW-0503">Monooxygenase</keyword>
<keyword id="KW-0560">Oxidoreductase</keyword>
<keyword id="KW-1185">Reference proteome</keyword>
<keyword id="KW-0812">Transmembrane</keyword>
<keyword id="KW-1133">Transmembrane helix</keyword>
<dbReference type="EC" id="1.14.-.-"/>
<dbReference type="EMBL" id="AAFI02000011">
    <property type="protein sequence ID" value="EAL70405.1"/>
    <property type="molecule type" value="Genomic_DNA"/>
</dbReference>
<dbReference type="EMBL" id="AAFI02000009">
    <property type="protein sequence ID" value="EAL71160.1"/>
    <property type="molecule type" value="Genomic_DNA"/>
</dbReference>
<dbReference type="RefSeq" id="XP_644330.1">
    <property type="nucleotide sequence ID" value="XM_639238.1"/>
</dbReference>
<dbReference type="RefSeq" id="XP_645084.1">
    <property type="nucleotide sequence ID" value="XM_639992.1"/>
</dbReference>
<dbReference type="SMR" id="Q556M5"/>
<dbReference type="FunCoup" id="Q556M5">
    <property type="interactions" value="9"/>
</dbReference>
<dbReference type="STRING" id="44689.Q556M5"/>
<dbReference type="GlyGen" id="Q556M5">
    <property type="glycosylation" value="1 site"/>
</dbReference>
<dbReference type="PaxDb" id="44689-DDB0232344"/>
<dbReference type="EnsemblProtists" id="EAL70405">
    <property type="protein sequence ID" value="EAL70405"/>
    <property type="gene ID" value="DDB_G0273943"/>
</dbReference>
<dbReference type="EnsemblProtists" id="EAL71160">
    <property type="protein sequence ID" value="EAL71160"/>
    <property type="gene ID" value="DDB_G0273045"/>
</dbReference>
<dbReference type="GeneID" id="8618758"/>
<dbReference type="GeneID" id="8619218"/>
<dbReference type="KEGG" id="ddi:DDB_G0273045"/>
<dbReference type="KEGG" id="ddi:DDB_G0273943"/>
<dbReference type="dictyBase" id="DDB_G0273045">
    <property type="gene designation" value="cyp508A1-1"/>
</dbReference>
<dbReference type="dictyBase" id="DDB_G0273943">
    <property type="gene designation" value="cyp508A1-2"/>
</dbReference>
<dbReference type="VEuPathDB" id="AmoebaDB:DDB_G0273943"/>
<dbReference type="eggNOG" id="KOG0156">
    <property type="taxonomic scope" value="Eukaryota"/>
</dbReference>
<dbReference type="HOGENOM" id="CLU_001570_22_0_1"/>
<dbReference type="InParanoid" id="Q556M5"/>
<dbReference type="OMA" id="VVELNRW"/>
<dbReference type="PhylomeDB" id="Q556M5"/>
<dbReference type="Reactome" id="R-DDI-211935">
    <property type="pathway name" value="Fatty acids"/>
</dbReference>
<dbReference type="Reactome" id="R-DDI-211945">
    <property type="pathway name" value="Phase I - Functionalization of compounds"/>
</dbReference>
<dbReference type="Reactome" id="R-DDI-211958">
    <property type="pathway name" value="Miscellaneous substrates"/>
</dbReference>
<dbReference type="Reactome" id="R-DDI-211981">
    <property type="pathway name" value="Xenobiotics"/>
</dbReference>
<dbReference type="Reactome" id="R-DDI-211999">
    <property type="pathway name" value="CYP2E1 reactions"/>
</dbReference>
<dbReference type="Reactome" id="R-DDI-2142670">
    <property type="pathway name" value="Synthesis of epoxy (EET) and dihydroxyeicosatrienoic acids (DHET)"/>
</dbReference>
<dbReference type="Reactome" id="R-DDI-2142816">
    <property type="pathway name" value="Synthesis of (16-20)-hydroxyeicosatetraenoic acids (HETE)"/>
</dbReference>
<dbReference type="Reactome" id="R-DDI-5423646">
    <property type="pathway name" value="Aflatoxin activation and detoxification"/>
</dbReference>
<dbReference type="Reactome" id="R-DDI-9027307">
    <property type="pathway name" value="Biosynthesis of maresin-like SPMs"/>
</dbReference>
<dbReference type="Reactome" id="R-DDI-9749641">
    <property type="pathway name" value="Aspirin ADME"/>
</dbReference>
<dbReference type="Reactome" id="R-DDI-9753281">
    <property type="pathway name" value="Paracetamol ADME"/>
</dbReference>
<dbReference type="PRO" id="PR:Q556M5"/>
<dbReference type="Proteomes" id="UP000002195">
    <property type="component" value="Chromosome 2"/>
</dbReference>
<dbReference type="GO" id="GO:0016020">
    <property type="term" value="C:membrane"/>
    <property type="evidence" value="ECO:0007669"/>
    <property type="project" value="UniProtKB-SubCell"/>
</dbReference>
<dbReference type="GO" id="GO:0020037">
    <property type="term" value="F:heme binding"/>
    <property type="evidence" value="ECO:0007669"/>
    <property type="project" value="InterPro"/>
</dbReference>
<dbReference type="GO" id="GO:0005506">
    <property type="term" value="F:iron ion binding"/>
    <property type="evidence" value="ECO:0007669"/>
    <property type="project" value="InterPro"/>
</dbReference>
<dbReference type="GO" id="GO:0004497">
    <property type="term" value="F:monooxygenase activity"/>
    <property type="evidence" value="ECO:0007669"/>
    <property type="project" value="UniProtKB-KW"/>
</dbReference>
<dbReference type="GO" id="GO:0016705">
    <property type="term" value="F:oxidoreductase activity, acting on paired donors, with incorporation or reduction of molecular oxygen"/>
    <property type="evidence" value="ECO:0007669"/>
    <property type="project" value="InterPro"/>
</dbReference>
<dbReference type="CDD" id="cd20617">
    <property type="entry name" value="CYP1_2-like"/>
    <property type="match status" value="1"/>
</dbReference>
<dbReference type="FunFam" id="1.10.630.10:FF:000068">
    <property type="entry name" value="Probable cytochrome P450 508A2"/>
    <property type="match status" value="1"/>
</dbReference>
<dbReference type="Gene3D" id="1.10.630.10">
    <property type="entry name" value="Cytochrome P450"/>
    <property type="match status" value="1"/>
</dbReference>
<dbReference type="InterPro" id="IPR001128">
    <property type="entry name" value="Cyt_P450"/>
</dbReference>
<dbReference type="InterPro" id="IPR017972">
    <property type="entry name" value="Cyt_P450_CS"/>
</dbReference>
<dbReference type="InterPro" id="IPR002401">
    <property type="entry name" value="Cyt_P450_E_grp-I"/>
</dbReference>
<dbReference type="InterPro" id="IPR036396">
    <property type="entry name" value="Cyt_P450_sf"/>
</dbReference>
<dbReference type="PANTHER" id="PTHR24289">
    <property type="entry name" value="STEROID 17-ALPHA-HYDROXYLASE/17,20 LYASE"/>
    <property type="match status" value="1"/>
</dbReference>
<dbReference type="PANTHER" id="PTHR24289:SF1">
    <property type="entry name" value="STEROID 17-ALPHA-HYDROXYLASE_17,20 LYASE"/>
    <property type="match status" value="1"/>
</dbReference>
<dbReference type="Pfam" id="PF00067">
    <property type="entry name" value="p450"/>
    <property type="match status" value="1"/>
</dbReference>
<dbReference type="PRINTS" id="PR00463">
    <property type="entry name" value="EP450I"/>
</dbReference>
<dbReference type="PRINTS" id="PR00385">
    <property type="entry name" value="P450"/>
</dbReference>
<dbReference type="SUPFAM" id="SSF48264">
    <property type="entry name" value="Cytochrome P450"/>
    <property type="match status" value="1"/>
</dbReference>
<dbReference type="PROSITE" id="PS00086">
    <property type="entry name" value="CYTOCHROME_P450"/>
    <property type="match status" value="1"/>
</dbReference>
<sequence length="484" mass="55936">MALFEIIISLFVVYIIHNAISKYKKIHVNELCGPTPIPILGNLHQFGELPHRVLTKMTKKYGHILRVYMADMYTVVVSDPLLIREMYVDNSDIFTDRVKKPSVEHGTFYHGTVTSYGEHWKNNREIVGKAMRKTNLKHIYELLDKQVDVLIRSMKSIETSGKTFDTRYYITKFTMSAMFKFLFNHDIPEDEDINKGDTQKLMGPMSEVFQNAGRGSLFDVINITQPLYLLYLEMFDQSFKDIMKYHREKYNEHLKTFDPDVERDLLDILIKEYGTDNDDKILSILATINDFFLAGVDTSSTALESMVLMLTNYPEIQEKAFDEIKTVVNGRSKVNLSDRQSTPYLVAVIKETLRYKPMSPFGLPRSSSKDCMIGGHFIPKNAQILINYQALGMNEEYYENPEQFDPSRFLKVESNVAFLPFSIGIRSCVGQSFAQDELYICISNILLNFKLKSIDGKKIDETEEYGLTLKTKNRFNVTLEKRII</sequence>
<gene>
    <name type="primary">cyp508A1-1</name>
    <name type="ORF">DDB_G0273045</name>
</gene>
<gene>
    <name type="primary">cyp508A1-2</name>
    <name type="ORF">DDB_G0273943</name>
</gene>
<feature type="chain" id="PRO_0000318806" description="Probable cytochrome P450 508A1">
    <location>
        <begin position="1"/>
        <end position="484"/>
    </location>
</feature>
<feature type="transmembrane region" description="Helical" evidence="2">
    <location>
        <begin position="1"/>
        <end position="21"/>
    </location>
</feature>
<feature type="binding site" description="axial binding residue" evidence="1">
    <location>
        <position position="428"/>
    </location>
    <ligand>
        <name>heme</name>
        <dbReference type="ChEBI" id="CHEBI:30413"/>
    </ligand>
    <ligandPart>
        <name>Fe</name>
        <dbReference type="ChEBI" id="CHEBI:18248"/>
    </ligandPart>
</feature>
<protein>
    <recommendedName>
        <fullName>Probable cytochrome P450 508A1</fullName>
        <ecNumber>1.14.-.-</ecNumber>
    </recommendedName>
</protein>